<reference key="1">
    <citation type="journal article" date="2001" name="DNA Res.">
        <title>Prediction of the coding sequences of unidentified human genes. XX. The complete sequences of 100 new cDNA clones from brain which code for large proteins in vitro.</title>
        <authorList>
            <person name="Nagase T."/>
            <person name="Nakayama M."/>
            <person name="Nakajima D."/>
            <person name="Kikuno R."/>
            <person name="Ohara O."/>
        </authorList>
    </citation>
    <scope>NUCLEOTIDE SEQUENCE [LARGE SCALE MRNA] (ISOFORM 2)</scope>
    <scope>VARIANT VAL-38</scope>
    <source>
        <tissue>Brain</tissue>
    </source>
</reference>
<reference key="2">
    <citation type="journal article" date="2004" name="Nat. Genet.">
        <title>Complete sequencing and characterization of 21,243 full-length human cDNAs.</title>
        <authorList>
            <person name="Ota T."/>
            <person name="Suzuki Y."/>
            <person name="Nishikawa T."/>
            <person name="Otsuki T."/>
            <person name="Sugiyama T."/>
            <person name="Irie R."/>
            <person name="Wakamatsu A."/>
            <person name="Hayashi K."/>
            <person name="Sato H."/>
            <person name="Nagai K."/>
            <person name="Kimura K."/>
            <person name="Makita H."/>
            <person name="Sekine M."/>
            <person name="Obayashi M."/>
            <person name="Nishi T."/>
            <person name="Shibahara T."/>
            <person name="Tanaka T."/>
            <person name="Ishii S."/>
            <person name="Yamamoto J."/>
            <person name="Saito K."/>
            <person name="Kawai Y."/>
            <person name="Isono Y."/>
            <person name="Nakamura Y."/>
            <person name="Nagahari K."/>
            <person name="Murakami K."/>
            <person name="Yasuda T."/>
            <person name="Iwayanagi T."/>
            <person name="Wagatsuma M."/>
            <person name="Shiratori A."/>
            <person name="Sudo H."/>
            <person name="Hosoiri T."/>
            <person name="Kaku Y."/>
            <person name="Kodaira H."/>
            <person name="Kondo H."/>
            <person name="Sugawara M."/>
            <person name="Takahashi M."/>
            <person name="Kanda K."/>
            <person name="Yokoi T."/>
            <person name="Furuya T."/>
            <person name="Kikkawa E."/>
            <person name="Omura Y."/>
            <person name="Abe K."/>
            <person name="Kamihara K."/>
            <person name="Katsuta N."/>
            <person name="Sato K."/>
            <person name="Tanikawa M."/>
            <person name="Yamazaki M."/>
            <person name="Ninomiya K."/>
            <person name="Ishibashi T."/>
            <person name="Yamashita H."/>
            <person name="Murakawa K."/>
            <person name="Fujimori K."/>
            <person name="Tanai H."/>
            <person name="Kimata M."/>
            <person name="Watanabe M."/>
            <person name="Hiraoka S."/>
            <person name="Chiba Y."/>
            <person name="Ishida S."/>
            <person name="Ono Y."/>
            <person name="Takiguchi S."/>
            <person name="Watanabe S."/>
            <person name="Yosida M."/>
            <person name="Hotuta T."/>
            <person name="Kusano J."/>
            <person name="Kanehori K."/>
            <person name="Takahashi-Fujii A."/>
            <person name="Hara H."/>
            <person name="Tanase T.-O."/>
            <person name="Nomura Y."/>
            <person name="Togiya S."/>
            <person name="Komai F."/>
            <person name="Hara R."/>
            <person name="Takeuchi K."/>
            <person name="Arita M."/>
            <person name="Imose N."/>
            <person name="Musashino K."/>
            <person name="Yuuki H."/>
            <person name="Oshima A."/>
            <person name="Sasaki N."/>
            <person name="Aotsuka S."/>
            <person name="Yoshikawa Y."/>
            <person name="Matsunawa H."/>
            <person name="Ichihara T."/>
            <person name="Shiohata N."/>
            <person name="Sano S."/>
            <person name="Moriya S."/>
            <person name="Momiyama H."/>
            <person name="Satoh N."/>
            <person name="Takami S."/>
            <person name="Terashima Y."/>
            <person name="Suzuki O."/>
            <person name="Nakagawa S."/>
            <person name="Senoh A."/>
            <person name="Mizoguchi H."/>
            <person name="Goto Y."/>
            <person name="Shimizu F."/>
            <person name="Wakebe H."/>
            <person name="Hishigaki H."/>
            <person name="Watanabe T."/>
            <person name="Sugiyama A."/>
            <person name="Takemoto M."/>
            <person name="Kawakami B."/>
            <person name="Yamazaki M."/>
            <person name="Watanabe K."/>
            <person name="Kumagai A."/>
            <person name="Itakura S."/>
            <person name="Fukuzumi Y."/>
            <person name="Fujimori Y."/>
            <person name="Komiyama M."/>
            <person name="Tashiro H."/>
            <person name="Tanigami A."/>
            <person name="Fujiwara T."/>
            <person name="Ono T."/>
            <person name="Yamada K."/>
            <person name="Fujii Y."/>
            <person name="Ozaki K."/>
            <person name="Hirao M."/>
            <person name="Ohmori Y."/>
            <person name="Kawabata A."/>
            <person name="Hikiji T."/>
            <person name="Kobatake N."/>
            <person name="Inagaki H."/>
            <person name="Ikema Y."/>
            <person name="Okamoto S."/>
            <person name="Okitani R."/>
            <person name="Kawakami T."/>
            <person name="Noguchi S."/>
            <person name="Itoh T."/>
            <person name="Shigeta K."/>
            <person name="Senba T."/>
            <person name="Matsumura K."/>
            <person name="Nakajima Y."/>
            <person name="Mizuno T."/>
            <person name="Morinaga M."/>
            <person name="Sasaki M."/>
            <person name="Togashi T."/>
            <person name="Oyama M."/>
            <person name="Hata H."/>
            <person name="Watanabe M."/>
            <person name="Komatsu T."/>
            <person name="Mizushima-Sugano J."/>
            <person name="Satoh T."/>
            <person name="Shirai Y."/>
            <person name="Takahashi Y."/>
            <person name="Nakagawa K."/>
            <person name="Okumura K."/>
            <person name="Nagase T."/>
            <person name="Nomura N."/>
            <person name="Kikuchi H."/>
            <person name="Masuho Y."/>
            <person name="Yamashita R."/>
            <person name="Nakai K."/>
            <person name="Yada T."/>
            <person name="Nakamura Y."/>
            <person name="Ohara O."/>
            <person name="Isogai T."/>
            <person name="Sugano S."/>
        </authorList>
    </citation>
    <scope>NUCLEOTIDE SEQUENCE [LARGE SCALE MRNA] (ISOFORM 5)</scope>
    <scope>NUCLEOTIDE SEQUENCE [LARGE SCALE MRNA] OF 384-1641 (ISOFORM 7)</scope>
    <scope>VARIANT VAL-38</scope>
    <source>
        <tissue>Spleen</tissue>
        <tissue>Thymus</tissue>
    </source>
</reference>
<reference key="3">
    <citation type="journal article" date="2007" name="BMC Genomics">
        <title>The full-ORF clone resource of the German cDNA consortium.</title>
        <authorList>
            <person name="Bechtel S."/>
            <person name="Rosenfelder H."/>
            <person name="Duda A."/>
            <person name="Schmidt C.P."/>
            <person name="Ernst U."/>
            <person name="Wellenreuther R."/>
            <person name="Mehrle A."/>
            <person name="Schuster C."/>
            <person name="Bahr A."/>
            <person name="Bloecker H."/>
            <person name="Heubner D."/>
            <person name="Hoerlein A."/>
            <person name="Michel G."/>
            <person name="Wedler H."/>
            <person name="Koehrer K."/>
            <person name="Ottenwaelder B."/>
            <person name="Poustka A."/>
            <person name="Wiemann S."/>
            <person name="Schupp I."/>
        </authorList>
    </citation>
    <scope>NUCLEOTIDE SEQUENCE [LARGE SCALE MRNA] (ISOFORMS 1 AND 3)</scope>
    <scope>VARIANT VAL-38</scope>
    <source>
        <tissue>Testis</tissue>
    </source>
</reference>
<reference key="4">
    <citation type="journal article" date="2006" name="Nature">
        <title>DNA sequence and analysis of human chromosome 8.</title>
        <authorList>
            <person name="Nusbaum C."/>
            <person name="Mikkelsen T.S."/>
            <person name="Zody M.C."/>
            <person name="Asakawa S."/>
            <person name="Taudien S."/>
            <person name="Garber M."/>
            <person name="Kodira C.D."/>
            <person name="Schueler M.G."/>
            <person name="Shimizu A."/>
            <person name="Whittaker C.A."/>
            <person name="Chang J.L."/>
            <person name="Cuomo C.A."/>
            <person name="Dewar K."/>
            <person name="FitzGerald M.G."/>
            <person name="Yang X."/>
            <person name="Allen N.R."/>
            <person name="Anderson S."/>
            <person name="Asakawa T."/>
            <person name="Blechschmidt K."/>
            <person name="Bloom T."/>
            <person name="Borowsky M.L."/>
            <person name="Butler J."/>
            <person name="Cook A."/>
            <person name="Corum B."/>
            <person name="DeArellano K."/>
            <person name="DeCaprio D."/>
            <person name="Dooley K.T."/>
            <person name="Dorris L. III"/>
            <person name="Engels R."/>
            <person name="Gloeckner G."/>
            <person name="Hafez N."/>
            <person name="Hagopian D.S."/>
            <person name="Hall J.L."/>
            <person name="Ishikawa S.K."/>
            <person name="Jaffe D.B."/>
            <person name="Kamat A."/>
            <person name="Kudoh J."/>
            <person name="Lehmann R."/>
            <person name="Lokitsang T."/>
            <person name="Macdonald P."/>
            <person name="Major J.E."/>
            <person name="Matthews C.D."/>
            <person name="Mauceli E."/>
            <person name="Menzel U."/>
            <person name="Mihalev A.H."/>
            <person name="Minoshima S."/>
            <person name="Murayama Y."/>
            <person name="Naylor J.W."/>
            <person name="Nicol R."/>
            <person name="Nguyen C."/>
            <person name="O'Leary S.B."/>
            <person name="O'Neill K."/>
            <person name="Parker S.C.J."/>
            <person name="Polley A."/>
            <person name="Raymond C.K."/>
            <person name="Reichwald K."/>
            <person name="Rodriguez J."/>
            <person name="Sasaki T."/>
            <person name="Schilhabel M."/>
            <person name="Siddiqui R."/>
            <person name="Smith C.L."/>
            <person name="Sneddon T.P."/>
            <person name="Talamas J.A."/>
            <person name="Tenzin P."/>
            <person name="Topham K."/>
            <person name="Venkataraman V."/>
            <person name="Wen G."/>
            <person name="Yamazaki S."/>
            <person name="Young S.K."/>
            <person name="Zeng Q."/>
            <person name="Zimmer A.R."/>
            <person name="Rosenthal A."/>
            <person name="Birren B.W."/>
            <person name="Platzer M."/>
            <person name="Shimizu N."/>
            <person name="Lander E.S."/>
        </authorList>
    </citation>
    <scope>NUCLEOTIDE SEQUENCE [LARGE SCALE GENOMIC DNA]</scope>
</reference>
<reference key="5">
    <citation type="submission" date="2005-09" db="EMBL/GenBank/DDBJ databases">
        <authorList>
            <person name="Mural R.J."/>
            <person name="Istrail S."/>
            <person name="Sutton G.G."/>
            <person name="Florea L."/>
            <person name="Halpern A.L."/>
            <person name="Mobarry C.M."/>
            <person name="Lippert R."/>
            <person name="Walenz B."/>
            <person name="Shatkay H."/>
            <person name="Dew I."/>
            <person name="Miller J.R."/>
            <person name="Flanigan M.J."/>
            <person name="Edwards N.J."/>
            <person name="Bolanos R."/>
            <person name="Fasulo D."/>
            <person name="Halldorsson B.V."/>
            <person name="Hannenhalli S."/>
            <person name="Turner R."/>
            <person name="Yooseph S."/>
            <person name="Lu F."/>
            <person name="Nusskern D.R."/>
            <person name="Shue B.C."/>
            <person name="Zheng X.H."/>
            <person name="Zhong F."/>
            <person name="Delcher A.L."/>
            <person name="Huson D.H."/>
            <person name="Kravitz S.A."/>
            <person name="Mouchard L."/>
            <person name="Reinert K."/>
            <person name="Remington K.A."/>
            <person name="Clark A.G."/>
            <person name="Waterman M.S."/>
            <person name="Eichler E.E."/>
            <person name="Adams M.D."/>
            <person name="Hunkapiller M.W."/>
            <person name="Myers E.W."/>
            <person name="Venter J.C."/>
        </authorList>
    </citation>
    <scope>NUCLEOTIDE SEQUENCE [LARGE SCALE GENOMIC DNA]</scope>
    <scope>VARIANT VAL-38</scope>
</reference>
<reference key="6">
    <citation type="journal article" date="2004" name="Genome Res.">
        <title>The status, quality, and expansion of the NIH full-length cDNA project: the Mammalian Gene Collection (MGC).</title>
        <authorList>
            <consortium name="The MGC Project Team"/>
        </authorList>
    </citation>
    <scope>NUCLEOTIDE SEQUENCE [LARGE SCALE MRNA] (ISOFORMS 4 AND 6)</scope>
    <scope>VARIANT VAL-38</scope>
    <source>
        <tissue>Blood</tissue>
        <tissue>Placenta</tissue>
    </source>
</reference>
<reference key="7">
    <citation type="journal article" date="2024" name="Nature">
        <title>The HEAT repeat protein HPO-27 is a lysosome fission factor.</title>
        <authorList>
            <person name="Li L."/>
            <person name="Liu X."/>
            <person name="Yang S."/>
            <person name="Li M."/>
            <person name="Wu Y."/>
            <person name="Hu S."/>
            <person name="Wang W."/>
            <person name="Jiang A."/>
            <person name="Zhang Q."/>
            <person name="Zhang J."/>
            <person name="Ma X."/>
            <person name="Hu J."/>
            <person name="Zhao Q."/>
            <person name="Liu Y."/>
            <person name="Li D."/>
            <person name="Hu J."/>
            <person name="Yang C."/>
            <person name="Feng W."/>
            <person name="Wang X."/>
        </authorList>
    </citation>
    <scope>FUNCTION</scope>
    <scope>SUBUNIT</scope>
    <scope>SUBCELLULAR LOCATION</scope>
</reference>
<dbReference type="EMBL" id="AB058736">
    <property type="protein sequence ID" value="BAB47462.1"/>
    <property type="status" value="ALT_INIT"/>
    <property type="molecule type" value="mRNA"/>
</dbReference>
<dbReference type="EMBL" id="AK092861">
    <property type="status" value="NOT_ANNOTATED_CDS"/>
    <property type="molecule type" value="mRNA"/>
</dbReference>
<dbReference type="EMBL" id="AK093563">
    <property type="status" value="NOT_ANNOTATED_CDS"/>
    <property type="molecule type" value="mRNA"/>
</dbReference>
<dbReference type="EMBL" id="AL834309">
    <property type="protein sequence ID" value="CAD38979.1"/>
    <property type="status" value="ALT_INIT"/>
    <property type="molecule type" value="mRNA"/>
</dbReference>
<dbReference type="EMBL" id="AL834145">
    <property type="protein sequence ID" value="CAD38858.1"/>
    <property type="molecule type" value="mRNA"/>
</dbReference>
<dbReference type="EMBL" id="AC104592">
    <property type="status" value="NOT_ANNOTATED_CDS"/>
    <property type="molecule type" value="Genomic_DNA"/>
</dbReference>
<dbReference type="EMBL" id="AC145291">
    <property type="status" value="NOT_ANNOTATED_CDS"/>
    <property type="molecule type" value="Genomic_DNA"/>
</dbReference>
<dbReference type="EMBL" id="CH471162">
    <property type="protein sequence ID" value="EAW82134.1"/>
    <property type="molecule type" value="Genomic_DNA"/>
</dbReference>
<dbReference type="EMBL" id="CH471162">
    <property type="protein sequence ID" value="EAW82137.1"/>
    <property type="molecule type" value="Genomic_DNA"/>
</dbReference>
<dbReference type="EMBL" id="CH471162">
    <property type="protein sequence ID" value="EAW82143.1"/>
    <property type="molecule type" value="Genomic_DNA"/>
</dbReference>
<dbReference type="EMBL" id="BC040742">
    <property type="protein sequence ID" value="AAH40742.1"/>
    <property type="molecule type" value="mRNA"/>
</dbReference>
<dbReference type="EMBL" id="BC092486">
    <property type="protein sequence ID" value="AAH92486.1"/>
    <property type="status" value="ALT_INIT"/>
    <property type="molecule type" value="mRNA"/>
</dbReference>
<dbReference type="EMBL" id="BC057824">
    <property type="protein sequence ID" value="AAH57824.1"/>
    <property type="status" value="ALT_INIT"/>
    <property type="molecule type" value="mRNA"/>
</dbReference>
<dbReference type="EMBL" id="BC067855">
    <property type="protein sequence ID" value="AAH67855.1"/>
    <property type="status" value="ALT_INIT"/>
    <property type="molecule type" value="mRNA"/>
</dbReference>
<dbReference type="CCDS" id="CCDS47938.1">
    <molecule id="Q8NDA8-1"/>
</dbReference>
<dbReference type="CCDS" id="CCDS47939.1">
    <molecule id="Q8NDA8-4"/>
</dbReference>
<dbReference type="RefSeq" id="NP_001092750.2">
    <molecule id="Q8NDA8-4"/>
    <property type="nucleotide sequence ID" value="NM_001099280.3"/>
</dbReference>
<dbReference type="RefSeq" id="NP_001092751.2">
    <molecule id="Q8NDA8-4"/>
    <property type="nucleotide sequence ID" value="NM_001099281.3"/>
</dbReference>
<dbReference type="RefSeq" id="NP_001275743.1">
    <property type="nucleotide sequence ID" value="NM_001288814.1"/>
</dbReference>
<dbReference type="RefSeq" id="NP_115826.2">
    <molecule id="Q8NDA8-1"/>
    <property type="nucleotide sequence ID" value="NM_032450.2"/>
</dbReference>
<dbReference type="RefSeq" id="XP_011515575.2">
    <molecule id="Q8NDA8-1"/>
    <property type="nucleotide sequence ID" value="XM_011517273.3"/>
</dbReference>
<dbReference type="RefSeq" id="XP_011515587.1">
    <property type="nucleotide sequence ID" value="XM_011517285.1"/>
</dbReference>
<dbReference type="RefSeq" id="XP_011515588.2">
    <molecule id="Q8NDA8-4"/>
    <property type="nucleotide sequence ID" value="XM_011517286.3"/>
</dbReference>
<dbReference type="RefSeq" id="XP_047278137.1">
    <molecule id="Q8NDA8-1"/>
    <property type="nucleotide sequence ID" value="XM_047422181.1"/>
</dbReference>
<dbReference type="BioGRID" id="608397">
    <property type="interactions" value="93"/>
</dbReference>
<dbReference type="FunCoup" id="Q8NDA8">
    <property type="interactions" value="1426"/>
</dbReference>
<dbReference type="IntAct" id="Q8NDA8">
    <property type="interactions" value="31"/>
</dbReference>
<dbReference type="STRING" id="9606.ENSP00000435565"/>
<dbReference type="GlyGen" id="Q8NDA8">
    <property type="glycosylation" value="1 site, 1 O-linked glycan (1 site)"/>
</dbReference>
<dbReference type="iPTMnet" id="Q8NDA8"/>
<dbReference type="PhosphoSitePlus" id="Q8NDA8"/>
<dbReference type="SwissPalm" id="Q8NDA8"/>
<dbReference type="BioMuta" id="MROH1"/>
<dbReference type="DMDM" id="296439329"/>
<dbReference type="jPOST" id="Q8NDA8"/>
<dbReference type="MassIVE" id="Q8NDA8"/>
<dbReference type="PaxDb" id="9606-ENSP00000435565"/>
<dbReference type="PeptideAtlas" id="Q8NDA8"/>
<dbReference type="ProteomicsDB" id="73000">
    <molecule id="Q8NDA8-1"/>
</dbReference>
<dbReference type="ProteomicsDB" id="73001">
    <molecule id="Q8NDA8-2"/>
</dbReference>
<dbReference type="ProteomicsDB" id="73002">
    <molecule id="Q8NDA8-3"/>
</dbReference>
<dbReference type="ProteomicsDB" id="73003">
    <molecule id="Q8NDA8-4"/>
</dbReference>
<dbReference type="ProteomicsDB" id="73004">
    <molecule id="Q8NDA8-5"/>
</dbReference>
<dbReference type="ProteomicsDB" id="73005">
    <molecule id="Q8NDA8-6"/>
</dbReference>
<dbReference type="ProteomicsDB" id="73006">
    <molecule id="Q8NDA8-7"/>
</dbReference>
<dbReference type="Pumba" id="Q8NDA8"/>
<dbReference type="Antibodypedia" id="48391">
    <property type="antibodies" value="17 antibodies from 8 providers"/>
</dbReference>
<dbReference type="DNASU" id="727957"/>
<dbReference type="Ensembl" id="ENST00000326134.10">
    <molecule id="Q8NDA8-1"/>
    <property type="protein sequence ID" value="ENSP00000321737.5"/>
    <property type="gene ID" value="ENSG00000179832.18"/>
</dbReference>
<dbReference type="Ensembl" id="ENST00000423230.6">
    <molecule id="Q8NDA8-4"/>
    <property type="protein sequence ID" value="ENSP00000388174.2"/>
    <property type="gene ID" value="ENSG00000179832.18"/>
</dbReference>
<dbReference type="Ensembl" id="ENST00000528919.5">
    <molecule id="Q8NDA8-1"/>
    <property type="protein sequence ID" value="ENSP00000435565.1"/>
    <property type="gene ID" value="ENSG00000179832.18"/>
</dbReference>
<dbReference type="GeneID" id="727957"/>
<dbReference type="KEGG" id="hsa:727957"/>
<dbReference type="MANE-Select" id="ENST00000326134.10">
    <property type="protein sequence ID" value="ENSP00000321737.5"/>
    <property type="RefSeq nucleotide sequence ID" value="NM_032450.3"/>
    <property type="RefSeq protein sequence ID" value="NP_115826.3"/>
</dbReference>
<dbReference type="UCSC" id="uc003zbi.5">
    <molecule id="Q8NDA8-1"/>
    <property type="organism name" value="human"/>
</dbReference>
<dbReference type="AGR" id="HGNC:26958"/>
<dbReference type="CTD" id="727957"/>
<dbReference type="DisGeNET" id="727957"/>
<dbReference type="GeneCards" id="MROH1"/>
<dbReference type="HGNC" id="HGNC:26958">
    <property type="gene designation" value="MROH1"/>
</dbReference>
<dbReference type="HPA" id="ENSG00000179832">
    <property type="expression patterns" value="Tissue enhanced (thyroid)"/>
</dbReference>
<dbReference type="neXtProt" id="NX_Q8NDA8"/>
<dbReference type="OpenTargets" id="ENSG00000179832"/>
<dbReference type="PharmGKB" id="PA164720350"/>
<dbReference type="VEuPathDB" id="HostDB:ENSG00000179832"/>
<dbReference type="eggNOG" id="KOG2032">
    <property type="taxonomic scope" value="Eukaryota"/>
</dbReference>
<dbReference type="GeneTree" id="ENSGT00940000156930"/>
<dbReference type="HOGENOM" id="CLU_753442_0_0_1"/>
<dbReference type="InParanoid" id="Q8NDA8"/>
<dbReference type="OMA" id="EVYIKAM"/>
<dbReference type="OrthoDB" id="1884734at2759"/>
<dbReference type="PAN-GO" id="Q8NDA8">
    <property type="GO annotations" value="1 GO annotation based on evolutionary models"/>
</dbReference>
<dbReference type="PhylomeDB" id="Q8NDA8"/>
<dbReference type="TreeFam" id="TF315201"/>
<dbReference type="PathwayCommons" id="Q8NDA8"/>
<dbReference type="SignaLink" id="Q8NDA8"/>
<dbReference type="BioGRID-ORCS" id="727957">
    <property type="hits" value="9 hits in 1147 CRISPR screens"/>
</dbReference>
<dbReference type="ChiTaRS" id="MROH1">
    <property type="organism name" value="human"/>
</dbReference>
<dbReference type="GenomeRNAi" id="727957"/>
<dbReference type="Pharos" id="Q8NDA8">
    <property type="development level" value="Tdark"/>
</dbReference>
<dbReference type="PRO" id="PR:Q8NDA8"/>
<dbReference type="Proteomes" id="UP000005640">
    <property type="component" value="Chromosome 8"/>
</dbReference>
<dbReference type="RNAct" id="Q8NDA8">
    <property type="molecule type" value="protein"/>
</dbReference>
<dbReference type="Bgee" id="ENSG00000179832">
    <property type="expression patterns" value="Expressed in right lobe of thyroid gland and 171 other cell types or tissues"/>
</dbReference>
<dbReference type="ExpressionAtlas" id="Q8NDA8">
    <property type="expression patterns" value="baseline and differential"/>
</dbReference>
<dbReference type="GO" id="GO:0005737">
    <property type="term" value="C:cytoplasm"/>
    <property type="evidence" value="ECO:0000318"/>
    <property type="project" value="GO_Central"/>
</dbReference>
<dbReference type="GO" id="GO:0005765">
    <property type="term" value="C:lysosomal membrane"/>
    <property type="evidence" value="ECO:0000314"/>
    <property type="project" value="UniProtKB"/>
</dbReference>
<dbReference type="GO" id="GO:0140912">
    <property type="term" value="F:membrane destabilizing activity"/>
    <property type="evidence" value="ECO:0000314"/>
    <property type="project" value="UniProtKB"/>
</dbReference>
<dbReference type="GO" id="GO:0170064">
    <property type="term" value="P:lysosome fission"/>
    <property type="evidence" value="ECO:0000314"/>
    <property type="project" value="UniProtKB"/>
</dbReference>
<dbReference type="Gene3D" id="1.25.10.10">
    <property type="entry name" value="Leucine-rich Repeat Variant"/>
    <property type="match status" value="4"/>
</dbReference>
<dbReference type="InterPro" id="IPR011989">
    <property type="entry name" value="ARM-like"/>
</dbReference>
<dbReference type="InterPro" id="IPR016024">
    <property type="entry name" value="ARM-type_fold"/>
</dbReference>
<dbReference type="InterPro" id="IPR055406">
    <property type="entry name" value="HEAT_Maestro"/>
</dbReference>
<dbReference type="InterPro" id="IPR055408">
    <property type="entry name" value="HEAT_MROH2B-like"/>
</dbReference>
<dbReference type="InterPro" id="IPR021133">
    <property type="entry name" value="HEAT_type_2"/>
</dbReference>
<dbReference type="InterPro" id="IPR048465">
    <property type="entry name" value="Maestro-like_HEAT"/>
</dbReference>
<dbReference type="InterPro" id="IPR045206">
    <property type="entry name" value="Maestro_heat-like_prot"/>
</dbReference>
<dbReference type="InterPro" id="IPR056282">
    <property type="entry name" value="MROH2B-like_N_HEAT"/>
</dbReference>
<dbReference type="PANTHER" id="PTHR23120:SF44">
    <property type="entry name" value="MAESTRO HEAT-LIKE REPEAT-CONTAINING PROTEIN FAMILY MEMBER 1"/>
    <property type="match status" value="1"/>
</dbReference>
<dbReference type="PANTHER" id="PTHR23120">
    <property type="entry name" value="MAESTRO-RELATED HEAT DOMAIN-CONTAINING"/>
    <property type="match status" value="1"/>
</dbReference>
<dbReference type="Pfam" id="PF21047">
    <property type="entry name" value="HEAT_Maestro"/>
    <property type="match status" value="1"/>
</dbReference>
<dbReference type="Pfam" id="PF23210">
    <property type="entry name" value="HEAT_Maestro_2"/>
    <property type="match status" value="1"/>
</dbReference>
<dbReference type="Pfam" id="PF23221">
    <property type="entry name" value="HEAT_MROH2B_1st"/>
    <property type="match status" value="1"/>
</dbReference>
<dbReference type="Pfam" id="PF23227">
    <property type="entry name" value="HEAT_MROH2B_C"/>
    <property type="match status" value="1"/>
</dbReference>
<dbReference type="SUPFAM" id="SSF48371">
    <property type="entry name" value="ARM repeat"/>
    <property type="match status" value="2"/>
</dbReference>
<dbReference type="PROSITE" id="PS50077">
    <property type="entry name" value="HEAT_REPEAT"/>
    <property type="match status" value="1"/>
</dbReference>
<proteinExistence type="evidence at protein level"/>
<accession>Q8NDA8</accession>
<accession>C9JWM5</accession>
<accession>D3DWL5</accession>
<accession>Q0P612</accession>
<accession>Q569G6</accession>
<accession>Q6NVW4</accession>
<accession>Q8N230</accession>
<accession>Q8NAD1</accession>
<accession>Q8ND95</accession>
<accession>Q96JJ4</accession>
<feature type="chain" id="PRO_0000329402" description="Maestro heat-like repeat-containing protein family member 1">
    <location>
        <begin position="1"/>
        <end position="1641"/>
    </location>
</feature>
<feature type="repeat" description="HEAT 1">
    <location>
        <begin position="3"/>
        <end position="41"/>
    </location>
</feature>
<feature type="repeat" description="HEAT 2">
    <location>
        <begin position="159"/>
        <end position="198"/>
    </location>
</feature>
<feature type="repeat" description="HEAT 3">
    <location>
        <begin position="344"/>
        <end position="382"/>
    </location>
</feature>
<feature type="repeat" description="HEAT 4">
    <location>
        <begin position="385"/>
        <end position="423"/>
    </location>
</feature>
<feature type="repeat" description="HEAT 5">
    <location>
        <begin position="1048"/>
        <end position="1086"/>
    </location>
</feature>
<feature type="repeat" description="HEAT 6">
    <location>
        <begin position="1358"/>
        <end position="1396"/>
    </location>
</feature>
<feature type="repeat" description="HEAT 7">
    <location>
        <begin position="1605"/>
        <end position="1641"/>
    </location>
</feature>
<feature type="splice variant" id="VSP_032963" description="In isoform 3." evidence="10">
    <location>
        <begin position="1"/>
        <end position="1038"/>
    </location>
</feature>
<feature type="splice variant" id="VSP_032965" description="In isoform 6." evidence="9">
    <location>
        <begin position="1"/>
        <end position="68"/>
    </location>
</feature>
<feature type="splice variant" id="VSP_032966" description="In isoform 5." evidence="8">
    <original>ICVPVESSSPLVMSNQKEVLRCFTVLACSSPDRLLAFLLPRLDTSNERTRVGTLQVVRHVIN</original>
    <variation>VGGGRQGAGPGSAHPSVGSCWTRGAESKLGWMAQPRGAEDWAFPEGHSGDFLAMWRCSCPAQ</variation>
    <location>
        <begin position="317"/>
        <end position="378"/>
    </location>
</feature>
<feature type="splice variant" id="VSP_032967" description="In isoform 5." evidence="8">
    <location>
        <begin position="379"/>
        <end position="1641"/>
    </location>
</feature>
<feature type="splice variant" id="VSP_032968" description="In isoform 4." evidence="9">
    <original>AAQMEDKKPFILSSMRLPLLDTNSKVKRAVVQVISAMAHHGY</original>
    <variation>GSTNTRITLMLPSAVTRLKHEDCPARAAPQPADLTAAPASVA</variation>
    <location>
        <begin position="381"/>
        <end position="422"/>
    </location>
</feature>
<feature type="splice variant" id="VSP_032969" description="In isoform 6." evidence="9">
    <original>AAQMEDKKPFILSSMRLPLLDTNSKVKR</original>
    <variation>GECLHASLAATPGHVQDGAGPGRLCPSK</variation>
    <location>
        <begin position="381"/>
        <end position="408"/>
    </location>
</feature>
<feature type="splice variant" id="VSP_032970" description="In isoform 6." evidence="9">
    <location>
        <begin position="409"/>
        <end position="1641"/>
    </location>
</feature>
<feature type="splice variant" id="VSP_032971" description="In isoform 4." evidence="9">
    <location>
        <begin position="423"/>
        <end position="1641"/>
    </location>
</feature>
<feature type="splice variant" id="VSP_032972" description="In isoform 7." evidence="8">
    <original>EHTEETLPQEEWEEKLLMF</original>
    <variation>GEARVRMGCIALWGGQVSE</variation>
    <location>
        <begin position="592"/>
        <end position="610"/>
    </location>
</feature>
<feature type="splice variant" id="VSP_032973" description="In isoform 7." evidence="8">
    <location>
        <begin position="611"/>
        <end position="1641"/>
    </location>
</feature>
<feature type="splice variant" id="VSP_032974" description="In isoform 2." evidence="7">
    <location>
        <begin position="774"/>
        <end position="782"/>
    </location>
</feature>
<feature type="splice variant" id="VSP_032975" description="In isoform 3." evidence="10">
    <original>GQ</original>
    <variation>MR</variation>
    <location>
        <begin position="1039"/>
        <end position="1040"/>
    </location>
</feature>
<feature type="splice variant" id="VSP_032976" description="In isoform 2." evidence="7">
    <original>SHTCMLWRALAVEP</original>
    <variation>RYPAQTPGLGVPLE</variation>
    <location>
        <begin position="1143"/>
        <end position="1156"/>
    </location>
</feature>
<feature type="splice variant" id="VSP_032977" description="In isoform 2." evidence="7">
    <location>
        <begin position="1157"/>
        <end position="1641"/>
    </location>
</feature>
<feature type="splice variant" id="VSP_032978" description="In isoform 3." evidence="10">
    <original>FLVLHSEPRQQPQVDLDQLIAALQILLKDPAPEVRTRAAEALGRLVKLA</original>
    <variation>KHHPLPHPHAARQPRLMPPLHRVPGAALGAQAAAAGGPGPAHCGAPDPAEGPGPRGADEGC</variation>
    <location>
        <begin position="1593"/>
        <end position="1641"/>
    </location>
</feature>
<feature type="sequence variant" id="VAR_062166" description="In dbSNP:rs34819224." evidence="1 2 3 4 6">
    <original>A</original>
    <variation>V</variation>
    <location>
        <position position="38"/>
    </location>
</feature>
<feature type="sequence conflict" description="In Ref. 2; AK093563." evidence="12" ref="2">
    <original>E</original>
    <variation>K</variation>
    <location>
        <position position="70"/>
    </location>
</feature>
<sequence length="1641" mass="181249">MTESSMKKLASTLLDAITDKDPLVQEQVCSALCSLGEARPVETLRACEEYLRQHDKLAHPYRAAVLRAMERVLSSRASELDKDTASTIILLASSEMTKTKDLVWDWQQAASGVLVAVGRQFISKVMEELLRRLHPGTLPHCAVLHTLASLSVANAFGVVPFLPSVLSSLLPVLGVAKQDTVRVAFCSALQRFSEGALEYLANLDRAPDPTVRKDAFATDIFSAYDVLFHQWLQSREAKLRLAVVEALGPMSHLLPSERLEEQLPKLLPGILALYKKHAETFYLSKSLGQILEAAVSVGSRTLETQLDALLAALHSQICVPVESSSPLVMSNQKEVLRCFTVLACSSPDRLLAFLLPRLDTSNERTRVGTLQVVRHVINSAAAQMEDKKPFILSSMRLPLLDTNSKVKRAVVQVISAMAHHGYLEQPGGEAMIEYIVQQCALPPEQEPEKPGPGSKDPKADSVRAISVRTLYLVSTTVDRMSHVLWPYLLQFLTPVRFTGALTPLCRSLVHLAQKRQEAGADAFLIQYDAHASLPSPYAVTGRLLVVSSSPYLGDGRGAAALRLLSVLHPNIHPLLGQHWETTVPLLLGYLDEHTEETLPQEEWEEKLLMFLRDTLAIISDNAWICQLSLELCRQLPCYDEAPQEKNFLYKCIGTTLGAASSKEVVRKHLQELLETARYQEEAEREGLACCFGICAISHLEDTLAQLEDFVRSEVFRKSIGILNIFKDRSENEVEKVKSALILCYGHVAARAPRELVLAKVESDILRNICQHFSTKVLGIKVETKDPALKLCLVQSVCMVSRAICSSTQAGSFHFTRKAELVAQMMEFIRAEPPDSLRTPIRKKAMLTCTYLVSVEPALDEQARADVIHGCLHSIMALLPEPKEEDGGCQKSLYLETLHALEDLLTSLLQRNMTPQGLQIMIEHLSPWIKSPRGHERARALGLSALLLRYFLEHLRVSALVPFHNLGLLIGLFSPRCADLWPATRQEAVDCVYSLLYLQLGYEGFSRDYRDDVAERLLSLKDGLVHPDPAILFHTCHSVGQIIAKRLPPDQLISLLLTMFEALGDPEKNCSRAATVMINCLLQERGGVLQEKVPEIVSVLRSKLQEAQGEHVLPAAQHSVYLLATQHCAAVVSSLLGSPLPLDSHTCMLWRALAVEPRLAAQVLGLLLEKMSRDVPFKESRAFLLGRTPDRVATLLPLSATCALFEVMSTPAAGPAVLELYPQLFVVLLLRVSCTVGVQLPRNLQAQERRGASPALATRNLEPCSSAVDTLRSMLLRSGSEDVVQRMDLEGGWELLRTSAGHEEGATRLARAMAEHAGPRLPLVLKTLACTHSSAYENQRVTTTAFLAELLNSNVANDLMLLDSLLESLAARQKDTCASVRRLVLRGLANLASGCPDKVRTHGPQLLTAMIGGLDDGDNPHSPVALEAMLGLARLVHLVESWDLRSGLLHVAIRIRPFFDSEKMEFRTASIRLFGHLNKVCHGDCEDVFLDQVVGGLAPLLLHLQDPQATVASACRFALRMCGPNLACEELSAAFQKHLQEGRALHFGEFLNTTCKHLMHHFPDLLGRLLTTCLFYFKSSWENVRAAAPLFTGFLVLHSEPRQQPQVDLDQLIAALQILLKDPAPEVRTRAAEALGRLVKLA</sequence>
<organism>
    <name type="scientific">Homo sapiens</name>
    <name type="common">Human</name>
    <dbReference type="NCBI Taxonomy" id="9606"/>
    <lineage>
        <taxon>Eukaryota</taxon>
        <taxon>Metazoa</taxon>
        <taxon>Chordata</taxon>
        <taxon>Craniata</taxon>
        <taxon>Vertebrata</taxon>
        <taxon>Euteleostomi</taxon>
        <taxon>Mammalia</taxon>
        <taxon>Eutheria</taxon>
        <taxon>Euarchontoglires</taxon>
        <taxon>Primates</taxon>
        <taxon>Haplorrhini</taxon>
        <taxon>Catarrhini</taxon>
        <taxon>Hominidae</taxon>
        <taxon>Homo</taxon>
    </lineage>
</organism>
<protein>
    <recommendedName>
        <fullName evidence="12">Maestro heat-like repeat-containing protein family member 1</fullName>
    </recommendedName>
    <alternativeName>
        <fullName>HEAT repeat-containing protein 7A</fullName>
    </alternativeName>
</protein>
<gene>
    <name evidence="11 13" type="primary">MROH1</name>
    <name evidence="13" type="synonym">HEATR7A</name>
    <name evidence="7" type="synonym">KIAA1833</name>
</gene>
<name>MROH1_HUMAN</name>
<evidence type="ECO:0000269" key="1">
    <source>
    </source>
</evidence>
<evidence type="ECO:0000269" key="2">
    <source>
    </source>
</evidence>
<evidence type="ECO:0000269" key="3">
    <source>
    </source>
</evidence>
<evidence type="ECO:0000269" key="4">
    <source>
    </source>
</evidence>
<evidence type="ECO:0000269" key="5">
    <source>
    </source>
</evidence>
<evidence type="ECO:0000269" key="6">
    <source ref="5"/>
</evidence>
<evidence type="ECO:0000303" key="7">
    <source>
    </source>
</evidence>
<evidence type="ECO:0000303" key="8">
    <source>
    </source>
</evidence>
<evidence type="ECO:0000303" key="9">
    <source>
    </source>
</evidence>
<evidence type="ECO:0000303" key="10">
    <source>
    </source>
</evidence>
<evidence type="ECO:0000303" key="11">
    <source>
    </source>
</evidence>
<evidence type="ECO:0000305" key="12"/>
<evidence type="ECO:0000312" key="13">
    <source>
        <dbReference type="HGNC" id="HGNC:26958"/>
    </source>
</evidence>
<keyword id="KW-0025">Alternative splicing</keyword>
<keyword id="KW-0458">Lysosome</keyword>
<keyword id="KW-0472">Membrane</keyword>
<keyword id="KW-1267">Proteomics identification</keyword>
<keyword id="KW-1185">Reference proteome</keyword>
<keyword id="KW-0677">Repeat</keyword>
<comment type="function">
    <text evidence="5">Lysosome fission factor (PubMed:38538795). Recruited to lysosomes by RAB7 (RAB7A or RAB7B) at scission sites and homooligomerizes to mediate the constriction and scission of lysosomal tubules (PubMed:38538795). May sever membranes by inserting amphipathic helices into one bilayer leaflet (PubMed:38538795). Lysosome fission is required to maintain their steady-state number, shape, size, composition and function, and to accomplish regeneration (PubMed:38538795).</text>
</comment>
<comment type="subunit">
    <text evidence="5">Homooligomer; homooligomerizes at lysosome scission sites.</text>
</comment>
<comment type="subcellular location">
    <subcellularLocation>
        <location evidence="5">Lysosome membrane</location>
    </subcellularLocation>
    <text evidence="5">Recruited to the lysosome membrane by RAB7 (RAB7A or RAB7B).</text>
</comment>
<comment type="alternative products">
    <event type="alternative splicing"/>
    <isoform>
        <id>Q8NDA8-1</id>
        <name>1</name>
        <sequence type="displayed"/>
    </isoform>
    <isoform>
        <id>Q8NDA8-2</id>
        <name>2</name>
        <sequence type="described" ref="VSP_032974 VSP_032976 VSP_032977"/>
    </isoform>
    <isoform>
        <id>Q8NDA8-3</id>
        <name>3</name>
        <sequence type="described" ref="VSP_032963 VSP_032975 VSP_032978"/>
    </isoform>
    <isoform>
        <id>Q8NDA8-4</id>
        <name>4</name>
        <sequence type="described" ref="VSP_032968 VSP_032971"/>
    </isoform>
    <isoform>
        <id>Q8NDA8-5</id>
        <name>5</name>
        <sequence type="described" ref="VSP_032966 VSP_032967"/>
    </isoform>
    <isoform>
        <id>Q8NDA8-6</id>
        <name>6</name>
        <sequence type="described" ref="VSP_032965 VSP_032969 VSP_032970"/>
    </isoform>
    <isoform>
        <id>Q8NDA8-7</id>
        <name>7</name>
        <sequence type="described" ref="VSP_032972 VSP_032973"/>
    </isoform>
</comment>
<comment type="similarity">
    <text evidence="12">Belongs to the MROH1 family.</text>
</comment>
<comment type="sequence caution" evidence="12">
    <conflict type="erroneous initiation">
        <sequence resource="EMBL-CDS" id="AAH57824"/>
    </conflict>
    <text>Extended N-terminus.</text>
</comment>
<comment type="sequence caution" evidence="12">
    <conflict type="erroneous initiation">
        <sequence resource="EMBL-CDS" id="AAH67855"/>
    </conflict>
    <text>Extended N-terminus.</text>
</comment>
<comment type="sequence caution" evidence="12">
    <conflict type="erroneous initiation">
        <sequence resource="EMBL-CDS" id="AAH92486"/>
    </conflict>
    <text>Extended N-terminus.</text>
</comment>
<comment type="sequence caution" evidence="12">
    <conflict type="erroneous initiation">
        <sequence resource="EMBL-CDS" id="BAB47462"/>
    </conflict>
    <text>Extended N-terminus.</text>
</comment>
<comment type="sequence caution" evidence="12">
    <conflict type="erroneous initiation">
        <sequence resource="EMBL-CDS" id="CAD38979"/>
    </conflict>
    <text>Extended N-terminus.</text>
</comment>